<evidence type="ECO:0000255" key="1">
    <source>
        <dbReference type="HAMAP-Rule" id="MF_01279"/>
    </source>
</evidence>
<accession>B7M650</accession>
<proteinExistence type="inferred from homology"/>
<gene>
    <name evidence="1" type="primary">pepQ</name>
    <name type="ordered locus">ECIAI1_4040</name>
</gene>
<reference key="1">
    <citation type="journal article" date="2009" name="PLoS Genet.">
        <title>Organised genome dynamics in the Escherichia coli species results in highly diverse adaptive paths.</title>
        <authorList>
            <person name="Touchon M."/>
            <person name="Hoede C."/>
            <person name="Tenaillon O."/>
            <person name="Barbe V."/>
            <person name="Baeriswyl S."/>
            <person name="Bidet P."/>
            <person name="Bingen E."/>
            <person name="Bonacorsi S."/>
            <person name="Bouchier C."/>
            <person name="Bouvet O."/>
            <person name="Calteau A."/>
            <person name="Chiapello H."/>
            <person name="Clermont O."/>
            <person name="Cruveiller S."/>
            <person name="Danchin A."/>
            <person name="Diard M."/>
            <person name="Dossat C."/>
            <person name="Karoui M.E."/>
            <person name="Frapy E."/>
            <person name="Garry L."/>
            <person name="Ghigo J.M."/>
            <person name="Gilles A.M."/>
            <person name="Johnson J."/>
            <person name="Le Bouguenec C."/>
            <person name="Lescat M."/>
            <person name="Mangenot S."/>
            <person name="Martinez-Jehanne V."/>
            <person name="Matic I."/>
            <person name="Nassif X."/>
            <person name="Oztas S."/>
            <person name="Petit M.A."/>
            <person name="Pichon C."/>
            <person name="Rouy Z."/>
            <person name="Ruf C.S."/>
            <person name="Schneider D."/>
            <person name="Tourret J."/>
            <person name="Vacherie B."/>
            <person name="Vallenet D."/>
            <person name="Medigue C."/>
            <person name="Rocha E.P.C."/>
            <person name="Denamur E."/>
        </authorList>
    </citation>
    <scope>NUCLEOTIDE SEQUENCE [LARGE SCALE GENOMIC DNA]</scope>
    <source>
        <strain>IAI1</strain>
    </source>
</reference>
<comment type="function">
    <text evidence="1">Splits dipeptides with a prolyl residue in the C-terminal position.</text>
</comment>
<comment type="catalytic activity">
    <reaction evidence="1">
        <text>Xaa-L-Pro dipeptide + H2O = an L-alpha-amino acid + L-proline</text>
        <dbReference type="Rhea" id="RHEA:76407"/>
        <dbReference type="ChEBI" id="CHEBI:15377"/>
        <dbReference type="ChEBI" id="CHEBI:59869"/>
        <dbReference type="ChEBI" id="CHEBI:60039"/>
        <dbReference type="ChEBI" id="CHEBI:195196"/>
        <dbReference type="EC" id="3.4.13.9"/>
    </reaction>
</comment>
<comment type="cofactor">
    <cofactor evidence="1">
        <name>Mn(2+)</name>
        <dbReference type="ChEBI" id="CHEBI:29035"/>
    </cofactor>
    <text evidence="1">Binds 2 manganese ions per subunit.</text>
</comment>
<comment type="similarity">
    <text evidence="1">Belongs to the peptidase M24B family. Bacterial-type prolidase subfamily.</text>
</comment>
<name>PEPQ_ECO8A</name>
<organism>
    <name type="scientific">Escherichia coli O8 (strain IAI1)</name>
    <dbReference type="NCBI Taxonomy" id="585034"/>
    <lineage>
        <taxon>Bacteria</taxon>
        <taxon>Pseudomonadati</taxon>
        <taxon>Pseudomonadota</taxon>
        <taxon>Gammaproteobacteria</taxon>
        <taxon>Enterobacterales</taxon>
        <taxon>Enterobacteriaceae</taxon>
        <taxon>Escherichia</taxon>
    </lineage>
</organism>
<dbReference type="EC" id="3.4.13.9" evidence="1"/>
<dbReference type="EMBL" id="CU928160">
    <property type="protein sequence ID" value="CAR00821.1"/>
    <property type="molecule type" value="Genomic_DNA"/>
</dbReference>
<dbReference type="RefSeq" id="WP_000444574.1">
    <property type="nucleotide sequence ID" value="NC_011741.1"/>
</dbReference>
<dbReference type="SMR" id="B7M650"/>
<dbReference type="MEROPS" id="M24.003"/>
<dbReference type="KEGG" id="ecr:ECIAI1_4040"/>
<dbReference type="HOGENOM" id="CLU_050675_0_0_6"/>
<dbReference type="GO" id="GO:0005829">
    <property type="term" value="C:cytosol"/>
    <property type="evidence" value="ECO:0007669"/>
    <property type="project" value="TreeGrafter"/>
</dbReference>
<dbReference type="GO" id="GO:0004177">
    <property type="term" value="F:aminopeptidase activity"/>
    <property type="evidence" value="ECO:0007669"/>
    <property type="project" value="TreeGrafter"/>
</dbReference>
<dbReference type="GO" id="GO:0046872">
    <property type="term" value="F:metal ion binding"/>
    <property type="evidence" value="ECO:0007669"/>
    <property type="project" value="UniProtKB-KW"/>
</dbReference>
<dbReference type="GO" id="GO:0008235">
    <property type="term" value="F:metalloexopeptidase activity"/>
    <property type="evidence" value="ECO:0007669"/>
    <property type="project" value="UniProtKB-UniRule"/>
</dbReference>
<dbReference type="GO" id="GO:0016795">
    <property type="term" value="F:phosphoric triester hydrolase activity"/>
    <property type="evidence" value="ECO:0007669"/>
    <property type="project" value="InterPro"/>
</dbReference>
<dbReference type="GO" id="GO:0102009">
    <property type="term" value="F:proline dipeptidase activity"/>
    <property type="evidence" value="ECO:0007669"/>
    <property type="project" value="UniProtKB-EC"/>
</dbReference>
<dbReference type="GO" id="GO:0006508">
    <property type="term" value="P:proteolysis"/>
    <property type="evidence" value="ECO:0007669"/>
    <property type="project" value="UniProtKB-KW"/>
</dbReference>
<dbReference type="CDD" id="cd01087">
    <property type="entry name" value="Prolidase"/>
    <property type="match status" value="1"/>
</dbReference>
<dbReference type="FunFam" id="3.40.350.10:FF:000002">
    <property type="entry name" value="Xaa-Pro dipeptidase"/>
    <property type="match status" value="1"/>
</dbReference>
<dbReference type="FunFam" id="3.90.230.10:FF:000006">
    <property type="entry name" value="Xaa-Pro dipeptidase"/>
    <property type="match status" value="1"/>
</dbReference>
<dbReference type="Gene3D" id="3.90.230.10">
    <property type="entry name" value="Creatinase/methionine aminopeptidase superfamily"/>
    <property type="match status" value="1"/>
</dbReference>
<dbReference type="Gene3D" id="3.40.350.10">
    <property type="entry name" value="Creatinase/prolidase N-terminal domain"/>
    <property type="match status" value="1"/>
</dbReference>
<dbReference type="HAMAP" id="MF_01279">
    <property type="entry name" value="X_Pro_dipeptid"/>
    <property type="match status" value="1"/>
</dbReference>
<dbReference type="InterPro" id="IPR029149">
    <property type="entry name" value="Creatin/AminoP/Spt16_N"/>
</dbReference>
<dbReference type="InterPro" id="IPR036005">
    <property type="entry name" value="Creatinase/aminopeptidase-like"/>
</dbReference>
<dbReference type="InterPro" id="IPR048819">
    <property type="entry name" value="PepQ_N"/>
</dbReference>
<dbReference type="InterPro" id="IPR000994">
    <property type="entry name" value="Pept_M24"/>
</dbReference>
<dbReference type="InterPro" id="IPR001131">
    <property type="entry name" value="Peptidase_M24B_aminopep-P_CS"/>
</dbReference>
<dbReference type="InterPro" id="IPR052433">
    <property type="entry name" value="X-Pro_dipept-like"/>
</dbReference>
<dbReference type="InterPro" id="IPR022846">
    <property type="entry name" value="X_Pro_dipept"/>
</dbReference>
<dbReference type="NCBIfam" id="NF010133">
    <property type="entry name" value="PRK13607.1"/>
    <property type="match status" value="1"/>
</dbReference>
<dbReference type="PANTHER" id="PTHR43226">
    <property type="entry name" value="XAA-PRO AMINOPEPTIDASE 3"/>
    <property type="match status" value="1"/>
</dbReference>
<dbReference type="PANTHER" id="PTHR43226:SF8">
    <property type="entry name" value="XAA-PRO DIPEPTIDASE"/>
    <property type="match status" value="1"/>
</dbReference>
<dbReference type="Pfam" id="PF21216">
    <property type="entry name" value="PepQ_N"/>
    <property type="match status" value="1"/>
</dbReference>
<dbReference type="Pfam" id="PF00557">
    <property type="entry name" value="Peptidase_M24"/>
    <property type="match status" value="1"/>
</dbReference>
<dbReference type="SUPFAM" id="SSF55920">
    <property type="entry name" value="Creatinase/aminopeptidase"/>
    <property type="match status" value="1"/>
</dbReference>
<dbReference type="PROSITE" id="PS00491">
    <property type="entry name" value="PROLINE_PEPTIDASE"/>
    <property type="match status" value="1"/>
</dbReference>
<protein>
    <recommendedName>
        <fullName evidence="1">Xaa-Pro dipeptidase</fullName>
        <shortName evidence="1">X-Pro dipeptidase</shortName>
        <ecNumber evidence="1">3.4.13.9</ecNumber>
    </recommendedName>
    <alternativeName>
        <fullName evidence="1">Imidodipeptidase</fullName>
    </alternativeName>
    <alternativeName>
        <fullName evidence="1">Proline dipeptidase</fullName>
        <shortName evidence="1">Prolidase</shortName>
    </alternativeName>
</protein>
<sequence length="443" mass="50183">MESLASLYKNHIATLQERTRDALARFKLDALLIHSGELFNVFLDDHPYPFKVNPQFKAWVPVTQVPNCWLLVDGVNKPKLWFYLPVDYWHNVEPLPTSFWTEDVEVIALPKADGIGSLLPAARGNIGYIGPVPERALQLGIEASNINPKGVLDYLHYYRSFKTEYELACMREAQKMAVNGHRAAEEAFRSGMSEFDINIAYLTATGHRDTDVPYSNIVALNEHAAVLHYTKLDHQAPEEMYSFLLDAGAEYNGYAADLTRTWSAKSDNDYAQLVKDVNDEQLALIATMKAGVSYVDYHIQFHQRIAKLLRKHQIITDMSEEAMVENDLTGPFMPHGIGHPLGLQVHDVAGFMQDDSGTHLAAPAKYPYLRCTRILQPGMVLTIEPGIYFIESLLAPWREGQFSKHFNWQKIEALKPFGGIRIEDNVVIHENNVENMTRDLKLA</sequence>
<feature type="chain" id="PRO_1000140314" description="Xaa-Pro dipeptidase">
    <location>
        <begin position="1"/>
        <end position="443"/>
    </location>
</feature>
<feature type="binding site" evidence="1">
    <location>
        <position position="246"/>
    </location>
    <ligand>
        <name>Mn(2+)</name>
        <dbReference type="ChEBI" id="CHEBI:29035"/>
        <label>2</label>
    </ligand>
</feature>
<feature type="binding site" evidence="1">
    <location>
        <position position="257"/>
    </location>
    <ligand>
        <name>Mn(2+)</name>
        <dbReference type="ChEBI" id="CHEBI:29035"/>
        <label>1</label>
    </ligand>
</feature>
<feature type="binding site" evidence="1">
    <location>
        <position position="257"/>
    </location>
    <ligand>
        <name>Mn(2+)</name>
        <dbReference type="ChEBI" id="CHEBI:29035"/>
        <label>2</label>
    </ligand>
</feature>
<feature type="binding site" evidence="1">
    <location>
        <position position="339"/>
    </location>
    <ligand>
        <name>Mn(2+)</name>
        <dbReference type="ChEBI" id="CHEBI:29035"/>
        <label>1</label>
    </ligand>
</feature>
<feature type="binding site" evidence="1">
    <location>
        <position position="384"/>
    </location>
    <ligand>
        <name>Mn(2+)</name>
        <dbReference type="ChEBI" id="CHEBI:29035"/>
        <label>1</label>
    </ligand>
</feature>
<feature type="binding site" evidence="1">
    <location>
        <position position="423"/>
    </location>
    <ligand>
        <name>Mn(2+)</name>
        <dbReference type="ChEBI" id="CHEBI:29035"/>
        <label>1</label>
    </ligand>
</feature>
<feature type="binding site" evidence="1">
    <location>
        <position position="423"/>
    </location>
    <ligand>
        <name>Mn(2+)</name>
        <dbReference type="ChEBI" id="CHEBI:29035"/>
        <label>2</label>
    </ligand>
</feature>
<keyword id="KW-0224">Dipeptidase</keyword>
<keyword id="KW-0378">Hydrolase</keyword>
<keyword id="KW-0464">Manganese</keyword>
<keyword id="KW-0479">Metal-binding</keyword>
<keyword id="KW-0482">Metalloprotease</keyword>
<keyword id="KW-0645">Protease</keyword>